<comment type="function">
    <text evidence="3">Antitoxin component of a type II toxin-antitoxin (TA) system. Upon expression in E.coli neutralizes the effect of cognate toxin ParE1.</text>
</comment>
<comment type="similarity">
    <text evidence="4">Belongs to the ParD antitoxin family.</text>
</comment>
<name>PARD1_MYCTU</name>
<sequence>MGKNTSFVLDEHYSAFIDGEIAAGRYRSASEVIRSALRLLEDRETQLRALREALEAGERSGSSTPFDFDGFLGRKRADASRGR</sequence>
<proteinExistence type="evidence at protein level"/>
<reference key="1">
    <citation type="journal article" date="1998" name="Nature">
        <title>Deciphering the biology of Mycobacterium tuberculosis from the complete genome sequence.</title>
        <authorList>
            <person name="Cole S.T."/>
            <person name="Brosch R."/>
            <person name="Parkhill J."/>
            <person name="Garnier T."/>
            <person name="Churcher C.M."/>
            <person name="Harris D.E."/>
            <person name="Gordon S.V."/>
            <person name="Eiglmeier K."/>
            <person name="Gas S."/>
            <person name="Barry C.E. III"/>
            <person name="Tekaia F."/>
            <person name="Badcock K."/>
            <person name="Basham D."/>
            <person name="Brown D."/>
            <person name="Chillingworth T."/>
            <person name="Connor R."/>
            <person name="Davies R.M."/>
            <person name="Devlin K."/>
            <person name="Feltwell T."/>
            <person name="Gentles S."/>
            <person name="Hamlin N."/>
            <person name="Holroyd S."/>
            <person name="Hornsby T."/>
            <person name="Jagels K."/>
            <person name="Krogh A."/>
            <person name="McLean J."/>
            <person name="Moule S."/>
            <person name="Murphy L.D."/>
            <person name="Oliver S."/>
            <person name="Osborne J."/>
            <person name="Quail M.A."/>
            <person name="Rajandream M.A."/>
            <person name="Rogers J."/>
            <person name="Rutter S."/>
            <person name="Seeger K."/>
            <person name="Skelton S."/>
            <person name="Squares S."/>
            <person name="Squares R."/>
            <person name="Sulston J.E."/>
            <person name="Taylor K."/>
            <person name="Whitehead S."/>
            <person name="Barrell B.G."/>
        </authorList>
    </citation>
    <scope>NUCLEOTIDE SEQUENCE [LARGE SCALE GENOMIC DNA]</scope>
    <source>
        <strain>ATCC 25618 / H37Rv</strain>
    </source>
</reference>
<reference key="2">
    <citation type="journal article" date="2005" name="Nucleic Acids Res.">
        <title>Toxin-antitoxin loci are highly abundant in free-living but lost from host-associated prokaryotes.</title>
        <authorList>
            <person name="Pandey D.P."/>
            <person name="Gerdes K."/>
        </authorList>
    </citation>
    <scope>POSSIBLE FUNCTION</scope>
    <source>
        <strain>ATCC 25618 / H37Rv</strain>
    </source>
</reference>
<reference key="3">
    <citation type="journal article" date="2009" name="FEMS Microbiol. Lett.">
        <title>Killing activity and rescue function of genome-wide toxin-antitoxin loci of Mycobacterium tuberculosis.</title>
        <authorList>
            <person name="Gupta A."/>
        </authorList>
    </citation>
    <scope>EXPRESSION IN E.COLI</scope>
    <scope>FUNCTION AS AN ANTITOXIN</scope>
    <source>
        <strain>ATCC 25618 / H37Rv</strain>
    </source>
</reference>
<keyword id="KW-0002">3D-structure</keyword>
<keyword id="KW-0175">Coiled coil</keyword>
<keyword id="KW-1185">Reference proteome</keyword>
<keyword id="KW-1277">Toxin-antitoxin system</keyword>
<evidence type="ECO:0000255" key="1"/>
<evidence type="ECO:0000256" key="2">
    <source>
        <dbReference type="SAM" id="MobiDB-lite"/>
    </source>
</evidence>
<evidence type="ECO:0000269" key="3">
    <source>
    </source>
</evidence>
<evidence type="ECO:0000305" key="4"/>
<evidence type="ECO:0007829" key="5">
    <source>
        <dbReference type="PDB" id="8C24"/>
    </source>
</evidence>
<organism>
    <name type="scientific">Mycobacterium tuberculosis (strain ATCC 25618 / H37Rv)</name>
    <dbReference type="NCBI Taxonomy" id="83332"/>
    <lineage>
        <taxon>Bacteria</taxon>
        <taxon>Bacillati</taxon>
        <taxon>Actinomycetota</taxon>
        <taxon>Actinomycetes</taxon>
        <taxon>Mycobacteriales</taxon>
        <taxon>Mycobacteriaceae</taxon>
        <taxon>Mycobacterium</taxon>
        <taxon>Mycobacterium tuberculosis complex</taxon>
    </lineage>
</organism>
<dbReference type="EMBL" id="AL123456">
    <property type="protein sequence ID" value="CCP44728.1"/>
    <property type="molecule type" value="Genomic_DNA"/>
</dbReference>
<dbReference type="PIR" id="D70639">
    <property type="entry name" value="D70639"/>
</dbReference>
<dbReference type="RefSeq" id="NP_216476.1">
    <property type="nucleotide sequence ID" value="NC_000962.3"/>
</dbReference>
<dbReference type="RefSeq" id="WP_003409899.1">
    <property type="nucleotide sequence ID" value="NZ_NVQJ01000048.1"/>
</dbReference>
<dbReference type="PDB" id="8C24">
    <property type="method" value="X-ray"/>
    <property type="resolution" value="2.10 A"/>
    <property type="chains" value="C/D/E/F=1-83"/>
</dbReference>
<dbReference type="PDBsum" id="8C24"/>
<dbReference type="SMR" id="P9WIJ7"/>
<dbReference type="STRING" id="83332.Rv1960c"/>
<dbReference type="PaxDb" id="83332-Rv1960c"/>
<dbReference type="DNASU" id="885957"/>
<dbReference type="GeneID" id="885957"/>
<dbReference type="KEGG" id="mtu:Rv1960c"/>
<dbReference type="KEGG" id="mtv:RVBD_1960c"/>
<dbReference type="TubercuList" id="Rv1960c"/>
<dbReference type="eggNOG" id="COG3609">
    <property type="taxonomic scope" value="Bacteria"/>
</dbReference>
<dbReference type="InParanoid" id="P9WIJ7"/>
<dbReference type="OrthoDB" id="9815501at2"/>
<dbReference type="PhylomeDB" id="P9WIJ7"/>
<dbReference type="Proteomes" id="UP000001584">
    <property type="component" value="Chromosome"/>
</dbReference>
<dbReference type="GO" id="GO:0097351">
    <property type="term" value="F:toxin sequestering activity"/>
    <property type="evidence" value="ECO:0000353"/>
    <property type="project" value="MTBBASE"/>
</dbReference>
<dbReference type="GO" id="GO:0098754">
    <property type="term" value="P:detoxification"/>
    <property type="evidence" value="ECO:0000315"/>
    <property type="project" value="MTBBASE"/>
</dbReference>
<dbReference type="GO" id="GO:0006355">
    <property type="term" value="P:regulation of DNA-templated transcription"/>
    <property type="evidence" value="ECO:0007669"/>
    <property type="project" value="InterPro"/>
</dbReference>
<dbReference type="CDD" id="cd22231">
    <property type="entry name" value="RHH_NikR_HicB-like"/>
    <property type="match status" value="1"/>
</dbReference>
<dbReference type="Gene3D" id="6.10.10.120">
    <property type="entry name" value="Antitoxin ParD1-like"/>
    <property type="match status" value="1"/>
</dbReference>
<dbReference type="InterPro" id="IPR022789">
    <property type="entry name" value="ParD"/>
</dbReference>
<dbReference type="InterPro" id="IPR038296">
    <property type="entry name" value="ParD_sf"/>
</dbReference>
<dbReference type="InterPro" id="IPR010985">
    <property type="entry name" value="Ribbon_hlx_hlx"/>
</dbReference>
<dbReference type="NCBIfam" id="TIGR02606">
    <property type="entry name" value="antidote_CC2985"/>
    <property type="match status" value="1"/>
</dbReference>
<dbReference type="PANTHER" id="PTHR36582">
    <property type="entry name" value="ANTITOXIN PARD"/>
    <property type="match status" value="1"/>
</dbReference>
<dbReference type="PANTHER" id="PTHR36582:SF2">
    <property type="entry name" value="ANTITOXIN PARD"/>
    <property type="match status" value="1"/>
</dbReference>
<dbReference type="Pfam" id="PF03693">
    <property type="entry name" value="ParD_antitoxin"/>
    <property type="match status" value="1"/>
</dbReference>
<dbReference type="SUPFAM" id="SSF47598">
    <property type="entry name" value="Ribbon-helix-helix"/>
    <property type="match status" value="1"/>
</dbReference>
<gene>
    <name type="primary">parD1</name>
    <name type="ordered locus">Rv1960c</name>
    <name type="ORF">MTCY09F9.04</name>
</gene>
<feature type="chain" id="PRO_0000216353" description="Antitoxin ParD1">
    <location>
        <begin position="1"/>
        <end position="83"/>
    </location>
</feature>
<feature type="region of interest" description="Disordered" evidence="2">
    <location>
        <begin position="54"/>
        <end position="83"/>
    </location>
</feature>
<feature type="coiled-coil region" evidence="1">
    <location>
        <begin position="33"/>
        <end position="60"/>
    </location>
</feature>
<feature type="strand" evidence="5">
    <location>
        <begin position="5"/>
        <end position="8"/>
    </location>
</feature>
<feature type="helix" evidence="5">
    <location>
        <begin position="11"/>
        <end position="22"/>
    </location>
</feature>
<feature type="helix" evidence="5">
    <location>
        <begin position="29"/>
        <end position="59"/>
    </location>
</feature>
<feature type="helix" evidence="5">
    <location>
        <begin position="68"/>
        <end position="80"/>
    </location>
</feature>
<protein>
    <recommendedName>
        <fullName>Antitoxin ParD1</fullName>
    </recommendedName>
</protein>
<accession>P9WIJ7</accession>
<accession>L0T8D6</accession>
<accession>P67298</accession>
<accession>P95254</accession>